<organism>
    <name type="scientific">Synechococcus sp. (strain CC9311)</name>
    <dbReference type="NCBI Taxonomy" id="64471"/>
    <lineage>
        <taxon>Bacteria</taxon>
        <taxon>Bacillati</taxon>
        <taxon>Cyanobacteriota</taxon>
        <taxon>Cyanophyceae</taxon>
        <taxon>Synechococcales</taxon>
        <taxon>Synechococcaceae</taxon>
        <taxon>Synechococcus</taxon>
    </lineage>
</organism>
<name>SYP_SYNS3</name>
<gene>
    <name evidence="1" type="primary">proS</name>
    <name type="ordered locus">sync_2021</name>
</gene>
<proteinExistence type="inferred from homology"/>
<evidence type="ECO:0000255" key="1">
    <source>
        <dbReference type="HAMAP-Rule" id="MF_01569"/>
    </source>
</evidence>
<dbReference type="EC" id="6.1.1.15" evidence="1"/>
<dbReference type="EMBL" id="CP000435">
    <property type="protein sequence ID" value="ABI47531.1"/>
    <property type="molecule type" value="Genomic_DNA"/>
</dbReference>
<dbReference type="RefSeq" id="WP_011619936.1">
    <property type="nucleotide sequence ID" value="NC_008319.1"/>
</dbReference>
<dbReference type="SMR" id="Q0I8J8"/>
<dbReference type="STRING" id="64471.sync_2021"/>
<dbReference type="KEGG" id="syg:sync_2021"/>
<dbReference type="eggNOG" id="COG0442">
    <property type="taxonomic scope" value="Bacteria"/>
</dbReference>
<dbReference type="HOGENOM" id="CLU_016739_0_0_3"/>
<dbReference type="OrthoDB" id="9809052at2"/>
<dbReference type="Proteomes" id="UP000001961">
    <property type="component" value="Chromosome"/>
</dbReference>
<dbReference type="GO" id="GO:0005829">
    <property type="term" value="C:cytosol"/>
    <property type="evidence" value="ECO:0007669"/>
    <property type="project" value="TreeGrafter"/>
</dbReference>
<dbReference type="GO" id="GO:0002161">
    <property type="term" value="F:aminoacyl-tRNA deacylase activity"/>
    <property type="evidence" value="ECO:0007669"/>
    <property type="project" value="InterPro"/>
</dbReference>
<dbReference type="GO" id="GO:0005524">
    <property type="term" value="F:ATP binding"/>
    <property type="evidence" value="ECO:0007669"/>
    <property type="project" value="UniProtKB-UniRule"/>
</dbReference>
<dbReference type="GO" id="GO:0004827">
    <property type="term" value="F:proline-tRNA ligase activity"/>
    <property type="evidence" value="ECO:0007669"/>
    <property type="project" value="UniProtKB-UniRule"/>
</dbReference>
<dbReference type="GO" id="GO:0006433">
    <property type="term" value="P:prolyl-tRNA aminoacylation"/>
    <property type="evidence" value="ECO:0007669"/>
    <property type="project" value="UniProtKB-UniRule"/>
</dbReference>
<dbReference type="CDD" id="cd04334">
    <property type="entry name" value="ProRS-INS"/>
    <property type="match status" value="1"/>
</dbReference>
<dbReference type="CDD" id="cd00861">
    <property type="entry name" value="ProRS_anticodon_short"/>
    <property type="match status" value="1"/>
</dbReference>
<dbReference type="CDD" id="cd00779">
    <property type="entry name" value="ProRS_core_prok"/>
    <property type="match status" value="1"/>
</dbReference>
<dbReference type="Gene3D" id="3.40.50.800">
    <property type="entry name" value="Anticodon-binding domain"/>
    <property type="match status" value="1"/>
</dbReference>
<dbReference type="Gene3D" id="3.30.930.10">
    <property type="entry name" value="Bira Bifunctional Protein, Domain 2"/>
    <property type="match status" value="2"/>
</dbReference>
<dbReference type="HAMAP" id="MF_01569">
    <property type="entry name" value="Pro_tRNA_synth_type1"/>
    <property type="match status" value="1"/>
</dbReference>
<dbReference type="InterPro" id="IPR002314">
    <property type="entry name" value="aa-tRNA-synt_IIb"/>
</dbReference>
<dbReference type="InterPro" id="IPR006195">
    <property type="entry name" value="aa-tRNA-synth_II"/>
</dbReference>
<dbReference type="InterPro" id="IPR045864">
    <property type="entry name" value="aa-tRNA-synth_II/BPL/LPL"/>
</dbReference>
<dbReference type="InterPro" id="IPR004154">
    <property type="entry name" value="Anticodon-bd"/>
</dbReference>
<dbReference type="InterPro" id="IPR036621">
    <property type="entry name" value="Anticodon-bd_dom_sf"/>
</dbReference>
<dbReference type="InterPro" id="IPR002316">
    <property type="entry name" value="Pro-tRNA-ligase_IIa"/>
</dbReference>
<dbReference type="InterPro" id="IPR004500">
    <property type="entry name" value="Pro-tRNA-synth_IIa_bac-type"/>
</dbReference>
<dbReference type="InterPro" id="IPR023717">
    <property type="entry name" value="Pro-tRNA-Synthase_IIa_type1"/>
</dbReference>
<dbReference type="InterPro" id="IPR050062">
    <property type="entry name" value="Pro-tRNA_synthetase"/>
</dbReference>
<dbReference type="InterPro" id="IPR044140">
    <property type="entry name" value="ProRS_anticodon_short"/>
</dbReference>
<dbReference type="InterPro" id="IPR033730">
    <property type="entry name" value="ProRS_core_prok"/>
</dbReference>
<dbReference type="InterPro" id="IPR036754">
    <property type="entry name" value="YbaK/aa-tRNA-synt-asso_dom_sf"/>
</dbReference>
<dbReference type="InterPro" id="IPR007214">
    <property type="entry name" value="YbaK/aa-tRNA-synth-assoc-dom"/>
</dbReference>
<dbReference type="NCBIfam" id="NF006625">
    <property type="entry name" value="PRK09194.1"/>
    <property type="match status" value="1"/>
</dbReference>
<dbReference type="NCBIfam" id="TIGR00409">
    <property type="entry name" value="proS_fam_II"/>
    <property type="match status" value="1"/>
</dbReference>
<dbReference type="PANTHER" id="PTHR42753">
    <property type="entry name" value="MITOCHONDRIAL RIBOSOME PROTEIN L39/PROLYL-TRNA LIGASE FAMILY MEMBER"/>
    <property type="match status" value="1"/>
</dbReference>
<dbReference type="PANTHER" id="PTHR42753:SF2">
    <property type="entry name" value="PROLINE--TRNA LIGASE"/>
    <property type="match status" value="1"/>
</dbReference>
<dbReference type="Pfam" id="PF03129">
    <property type="entry name" value="HGTP_anticodon"/>
    <property type="match status" value="1"/>
</dbReference>
<dbReference type="Pfam" id="PF00587">
    <property type="entry name" value="tRNA-synt_2b"/>
    <property type="match status" value="1"/>
</dbReference>
<dbReference type="Pfam" id="PF04073">
    <property type="entry name" value="tRNA_edit"/>
    <property type="match status" value="1"/>
</dbReference>
<dbReference type="PRINTS" id="PR01046">
    <property type="entry name" value="TRNASYNTHPRO"/>
</dbReference>
<dbReference type="SUPFAM" id="SSF52954">
    <property type="entry name" value="Class II aaRS ABD-related"/>
    <property type="match status" value="1"/>
</dbReference>
<dbReference type="SUPFAM" id="SSF55681">
    <property type="entry name" value="Class II aaRS and biotin synthetases"/>
    <property type="match status" value="1"/>
</dbReference>
<dbReference type="SUPFAM" id="SSF55826">
    <property type="entry name" value="YbaK/ProRS associated domain"/>
    <property type="match status" value="1"/>
</dbReference>
<dbReference type="PROSITE" id="PS50862">
    <property type="entry name" value="AA_TRNA_LIGASE_II"/>
    <property type="match status" value="1"/>
</dbReference>
<sequence length="598" mass="66027">MRVSRLMLVTLRDVPADAEIASQQLLIRGGFIRRVGSGIYAYLPLMWRVLQRVMRIVREEMNQIGALETLLPQLQPAELWEKSGRWQGYTAGEGIMFHLEDRQERSLGLGPTHEEVITELASDLLRSYRQLPVTLYQIQSKFRDEIRPRFGLMRGREFIMKDAYSFHGDEGDLARMYEEMEKAYTRVFQRCGLTAVGVDADSGAIGGAASQEFMVTADAGEDLILISPDGDYAANQEKAVSIAPPALPLPSGESRVISTPGQVTIDELCSAQSLHPSQVVKVLLLLAKLESGDEQPVLVCLRGDQELNEVKLVNALTQQLDSPVLDLSPINADQVKTQGLQPLPLGSIGPDLSDHSLAGARSWKERFYKLADTTAAELERFVCGANTSNEHRWGASWSDLGTIPAMDLRNAKAGDHCVHRPEQSLEERRGIEVGHIFQLGRKYSLSMGAQITTKEGKQEHLWMGCYGIGISRLAQAAVEQHHDDAGIIWPLSIAPFQVIVVVANVQDEVQMALGEEIYNELLASGIDVLLDDRGERAGVKFKDADLIGIPWRVVVGRAAAEGNVELVKRSERDANVLSRAEAISSLLEAIPTELRIQL</sequence>
<keyword id="KW-0030">Aminoacyl-tRNA synthetase</keyword>
<keyword id="KW-0067">ATP-binding</keyword>
<keyword id="KW-0963">Cytoplasm</keyword>
<keyword id="KW-0436">Ligase</keyword>
<keyword id="KW-0547">Nucleotide-binding</keyword>
<keyword id="KW-0648">Protein biosynthesis</keyword>
<keyword id="KW-1185">Reference proteome</keyword>
<feature type="chain" id="PRO_0000288385" description="Proline--tRNA ligase">
    <location>
        <begin position="1"/>
        <end position="598"/>
    </location>
</feature>
<comment type="function">
    <text evidence="1">Catalyzes the attachment of proline to tRNA(Pro) in a two-step reaction: proline is first activated by ATP to form Pro-AMP and then transferred to the acceptor end of tRNA(Pro). As ProRS can inadvertently accommodate and process non-cognate amino acids such as alanine and cysteine, to avoid such errors it has two additional distinct editing activities against alanine. One activity is designated as 'pretransfer' editing and involves the tRNA(Pro)-independent hydrolysis of activated Ala-AMP. The other activity is designated 'posttransfer' editing and involves deacylation of mischarged Ala-tRNA(Pro). The misacylated Cys-tRNA(Pro) is not edited by ProRS.</text>
</comment>
<comment type="catalytic activity">
    <reaction evidence="1">
        <text>tRNA(Pro) + L-proline + ATP = L-prolyl-tRNA(Pro) + AMP + diphosphate</text>
        <dbReference type="Rhea" id="RHEA:14305"/>
        <dbReference type="Rhea" id="RHEA-COMP:9700"/>
        <dbReference type="Rhea" id="RHEA-COMP:9702"/>
        <dbReference type="ChEBI" id="CHEBI:30616"/>
        <dbReference type="ChEBI" id="CHEBI:33019"/>
        <dbReference type="ChEBI" id="CHEBI:60039"/>
        <dbReference type="ChEBI" id="CHEBI:78442"/>
        <dbReference type="ChEBI" id="CHEBI:78532"/>
        <dbReference type="ChEBI" id="CHEBI:456215"/>
        <dbReference type="EC" id="6.1.1.15"/>
    </reaction>
</comment>
<comment type="subunit">
    <text evidence="1">Homodimer.</text>
</comment>
<comment type="subcellular location">
    <subcellularLocation>
        <location evidence="1">Cytoplasm</location>
    </subcellularLocation>
</comment>
<comment type="domain">
    <text evidence="1">Consists of three domains: the N-terminal catalytic domain, the editing domain and the C-terminal anticodon-binding domain.</text>
</comment>
<comment type="similarity">
    <text evidence="1">Belongs to the class-II aminoacyl-tRNA synthetase family. ProS type 1 subfamily.</text>
</comment>
<accession>Q0I8J8</accession>
<reference key="1">
    <citation type="journal article" date="2006" name="Proc. Natl. Acad. Sci. U.S.A.">
        <title>Genome sequence of Synechococcus CC9311: insights into adaptation to a coastal environment.</title>
        <authorList>
            <person name="Palenik B."/>
            <person name="Ren Q."/>
            <person name="Dupont C.L."/>
            <person name="Myers G.S."/>
            <person name="Heidelberg J.F."/>
            <person name="Badger J.H."/>
            <person name="Madupu R."/>
            <person name="Nelson W.C."/>
            <person name="Brinkac L.M."/>
            <person name="Dodson R.J."/>
            <person name="Durkin A.S."/>
            <person name="Daugherty S.C."/>
            <person name="Sullivan S.A."/>
            <person name="Khouri H."/>
            <person name="Mohamoud Y."/>
            <person name="Halpin R."/>
            <person name="Paulsen I.T."/>
        </authorList>
    </citation>
    <scope>NUCLEOTIDE SEQUENCE [LARGE SCALE GENOMIC DNA]</scope>
    <source>
        <strain>CC9311</strain>
    </source>
</reference>
<protein>
    <recommendedName>
        <fullName evidence="1">Proline--tRNA ligase</fullName>
        <ecNumber evidence="1">6.1.1.15</ecNumber>
    </recommendedName>
    <alternativeName>
        <fullName evidence="1">Prolyl-tRNA synthetase</fullName>
        <shortName evidence="1">ProRS</shortName>
    </alternativeName>
</protein>